<sequence length="863" mass="96522">MGCVKLVFFMLYVFLFQLVSSSSLPHLCPEDQALALLQFKNMFTVNPNAFHYCPDITGREIQSYPRTLSWNKSTSCCSWDGVHCDETTGQVIALDLRCSQLQGKFHSNSSLFQLSNLKRLDLSNNNFIGSLISPKFGEFSDLTHLDLSDSSFTGVIPSEISHLSKLHVLLIGDQYGLSIVPHNFEPLLKNLTQLRELNLYEVNLSSTVPSNFSSHLTTLQLSGTGLRGLLPERVFHLSDLEFLDLSYNSQLMVRFPTTKWNSSASLMKLYVHSVNIADRIPESFSHLTSLHELDMGYTNLSGPIPKPLWNLTNIESLDLRYNHLEGPIPQLPIFEKLKKLSLFRNDNLDGGLEFLSFNTQLERLDLSSNSLTGPIPSNISGLQNLECLYLSSNHLNGSIPSWIFSLPSLVELDLSNNTFSGKIQEFKSKTLSAVTLKQNKLKGRIPNSLLNQKNLQLLLLSHNNISGHISSAICNLKTLILLDLGSNNLEGTIPQCVVERNEYLSHLDLSKNRLSGTINTTFSVGNILRVISLHGNKLTGKVPRSMINCKYLTLLDLGNNMLNDTFPNWLGYLFQLKILSLRSNKLHGPIKSSGNTNLFMGLQILDLSSNGFSGNLPERILGNLQTMKEIDESTGFPEYISDPYDIYYNYLTTISTKGQDYDSVRILDSNMIINLSKNRFEGHIPSIIGDLVGLRTLNLSHNVLEGHIPASFQNLSVLESLDLSSNKISGEIPQQLASLTFLEVLNLSHNHLVGCIPKGKQFDSFGNTSYQGNDGLRGFPLSKLCGGEDQVTTPAELDQEEEEEDSPMISWQGVLVGYGCGLVIGLSVIYIMWSTQYPAWFSRMDLKLEHIITTKMKKHKKRY</sequence>
<dbReference type="EMBL" id="AY569331">
    <property type="protein sequence ID" value="AAT77549.1"/>
    <property type="molecule type" value="Genomic_DNA"/>
</dbReference>
<dbReference type="SMR" id="P0DO06"/>
<dbReference type="GlyCosmos" id="P0DO06">
    <property type="glycosylation" value="19 sites, No reported glycans"/>
</dbReference>
<dbReference type="GO" id="GO:0005886">
    <property type="term" value="C:plasma membrane"/>
    <property type="evidence" value="ECO:0007669"/>
    <property type="project" value="UniProtKB-SubCell"/>
</dbReference>
<dbReference type="GO" id="GO:0050832">
    <property type="term" value="P:defense response to fungus"/>
    <property type="evidence" value="ECO:0000314"/>
    <property type="project" value="UniProtKB"/>
</dbReference>
<dbReference type="FunFam" id="3.80.10.10:FF:000111">
    <property type="entry name" value="LRR receptor-like serine/threonine-protein kinase ERECTA"/>
    <property type="match status" value="1"/>
</dbReference>
<dbReference type="FunFam" id="3.80.10.10:FF:000095">
    <property type="entry name" value="LRR receptor-like serine/threonine-protein kinase GSO1"/>
    <property type="match status" value="1"/>
</dbReference>
<dbReference type="FunFam" id="3.80.10.10:FF:000713">
    <property type="entry name" value="Receptor-like protein 48"/>
    <property type="match status" value="1"/>
</dbReference>
<dbReference type="FunFam" id="3.80.10.10:FF:001082">
    <property type="entry name" value="Receptor-like protein Cf-9"/>
    <property type="match status" value="1"/>
</dbReference>
<dbReference type="Gene3D" id="3.80.10.10">
    <property type="entry name" value="Ribonuclease Inhibitor"/>
    <property type="match status" value="4"/>
</dbReference>
<dbReference type="InterPro" id="IPR001611">
    <property type="entry name" value="Leu-rich_rpt"/>
</dbReference>
<dbReference type="InterPro" id="IPR003591">
    <property type="entry name" value="Leu-rich_rpt_typical-subtyp"/>
</dbReference>
<dbReference type="InterPro" id="IPR032675">
    <property type="entry name" value="LRR_dom_sf"/>
</dbReference>
<dbReference type="InterPro" id="IPR013210">
    <property type="entry name" value="LRR_N_plant-typ"/>
</dbReference>
<dbReference type="InterPro" id="IPR046956">
    <property type="entry name" value="RLP23-like"/>
</dbReference>
<dbReference type="PANTHER" id="PTHR48061">
    <property type="entry name" value="LEUCINE-RICH REPEAT RECEPTOR PROTEIN KINASE EMS1-LIKE-RELATED"/>
    <property type="match status" value="1"/>
</dbReference>
<dbReference type="PANTHER" id="PTHR48061:SF10">
    <property type="entry name" value="LEUCINE-RICH REPEAT-CONTAINING N-TERMINAL PLANT-TYPE DOMAIN-CONTAINING PROTEIN"/>
    <property type="match status" value="1"/>
</dbReference>
<dbReference type="Pfam" id="PF00560">
    <property type="entry name" value="LRR_1"/>
    <property type="match status" value="5"/>
</dbReference>
<dbReference type="Pfam" id="PF13855">
    <property type="entry name" value="LRR_8"/>
    <property type="match status" value="4"/>
</dbReference>
<dbReference type="Pfam" id="PF08263">
    <property type="entry name" value="LRRNT_2"/>
    <property type="match status" value="2"/>
</dbReference>
<dbReference type="PRINTS" id="PR00019">
    <property type="entry name" value="LEURICHRPT"/>
</dbReference>
<dbReference type="SMART" id="SM00365">
    <property type="entry name" value="LRR_SD22"/>
    <property type="match status" value="6"/>
</dbReference>
<dbReference type="SMART" id="SM00369">
    <property type="entry name" value="LRR_TYP"/>
    <property type="match status" value="7"/>
</dbReference>
<dbReference type="SUPFAM" id="SSF52058">
    <property type="entry name" value="L domain-like"/>
    <property type="match status" value="3"/>
</dbReference>
<organism>
    <name type="scientific">Solanum pimpinellifolium</name>
    <name type="common">Currant tomato</name>
    <name type="synonym">Lycopersicon pimpinellifolium</name>
    <dbReference type="NCBI Taxonomy" id="4084"/>
    <lineage>
        <taxon>Eukaryota</taxon>
        <taxon>Viridiplantae</taxon>
        <taxon>Streptophyta</taxon>
        <taxon>Embryophyta</taxon>
        <taxon>Tracheophyta</taxon>
        <taxon>Spermatophyta</taxon>
        <taxon>Magnoliopsida</taxon>
        <taxon>eudicotyledons</taxon>
        <taxon>Gunneridae</taxon>
        <taxon>Pentapetalae</taxon>
        <taxon>asterids</taxon>
        <taxon>lamiids</taxon>
        <taxon>Solanales</taxon>
        <taxon>Solanaceae</taxon>
        <taxon>Solanoideae</taxon>
        <taxon>Solaneae</taxon>
        <taxon>Solanum</taxon>
        <taxon>Solanum subgen. Lycopersicon</taxon>
    </lineage>
</organism>
<gene>
    <name evidence="8" type="primary">9DC2</name>
</gene>
<name>9DC2_SOLPI</name>
<keyword id="KW-1003">Cell membrane</keyword>
<keyword id="KW-0325">Glycoprotein</keyword>
<keyword id="KW-0433">Leucine-rich repeat</keyword>
<keyword id="KW-0472">Membrane</keyword>
<keyword id="KW-0611">Plant defense</keyword>
<keyword id="KW-0675">Receptor</keyword>
<keyword id="KW-0677">Repeat</keyword>
<keyword id="KW-0732">Signal</keyword>
<keyword id="KW-0812">Transmembrane</keyword>
<keyword id="KW-1133">Transmembrane helix</keyword>
<reference key="1">
    <citation type="journal article" date="2004" name="Genetics">
        <title>Rearrangements in the Cf-9 disease resistance gene cluster of wild tomato have resulted in three genes that mediate Avr9 responsiveness.</title>
        <authorList>
            <person name="Kruijt M."/>
            <person name="Brandwagt B.F."/>
            <person name="de Wit P.J."/>
        </authorList>
    </citation>
    <scope>NUCLEOTIDE SEQUENCE [GENOMIC DNA]</scope>
    <scope>FUNCTION</scope>
    <source>
        <strain>cv. LA1301</strain>
    </source>
</reference>
<comment type="function">
    <text evidence="5">Involved in plant defense. Confers resistance to the fungal pathogen C.fulvum through recognition of the AVR9 elicitor protein.</text>
</comment>
<comment type="subcellular location">
    <subcellularLocation>
        <location evidence="6">Cell membrane</location>
        <topology evidence="6">Single-pass type I membrane protein</topology>
    </subcellularLocation>
</comment>
<comment type="domain">
    <text evidence="1">The extracellular leucine-rich repeats are required for the specificity of the elicitor protein recognition.</text>
</comment>
<comment type="similarity">
    <text evidence="6">Belongs to the RLP family.</text>
</comment>
<comment type="caution">
    <text evidence="7">In cv. LA101, 9DC1 results from the rearrangement in the Cf-9 disease resistance gene cluster between Cf-9 and Hcr9-9D, both originating from the cv. Cf9.</text>
</comment>
<feature type="signal peptide" evidence="3">
    <location>
        <begin position="1"/>
        <end position="21"/>
    </location>
</feature>
<feature type="chain" id="PRO_0000443060" description="Receptor-like protein 9DC2">
    <location>
        <begin position="22"/>
        <end position="863"/>
    </location>
</feature>
<feature type="topological domain" description="Extracellular" evidence="3">
    <location>
        <begin position="22"/>
        <end position="812"/>
    </location>
</feature>
<feature type="transmembrane region" description="Helical" evidence="3">
    <location>
        <begin position="813"/>
        <end position="833"/>
    </location>
</feature>
<feature type="topological domain" description="Cytoplasmic" evidence="3">
    <location>
        <begin position="834"/>
        <end position="863"/>
    </location>
</feature>
<feature type="repeat" description="LRR 1; degenerate" evidence="6">
    <location>
        <begin position="91"/>
        <end position="114"/>
    </location>
</feature>
<feature type="repeat" description="LRR 2" evidence="3">
    <location>
        <begin position="115"/>
        <end position="138"/>
    </location>
</feature>
<feature type="repeat" description="LRR 3" evidence="3">
    <location>
        <begin position="140"/>
        <end position="163"/>
    </location>
</feature>
<feature type="repeat" description="LRR 4; degenerate" evidence="6">
    <location>
        <begin position="164"/>
        <end position="190"/>
    </location>
</feature>
<feature type="repeat" description="LRR 5" evidence="3">
    <location>
        <begin position="191"/>
        <end position="213"/>
    </location>
</feature>
<feature type="repeat" description="LRR 6" evidence="3">
    <location>
        <begin position="214"/>
        <end position="237"/>
    </location>
</feature>
<feature type="repeat" description="LRR 7" evidence="3">
    <location>
        <begin position="240"/>
        <end position="262"/>
    </location>
</feature>
<feature type="repeat" description="LRR 8" evidence="3">
    <location>
        <begin position="264"/>
        <end position="286"/>
    </location>
</feature>
<feature type="repeat" description="LRR 9" evidence="3">
    <location>
        <begin position="287"/>
        <end position="311"/>
    </location>
</feature>
<feature type="repeat" description="LRR 10" evidence="3">
    <location>
        <begin position="312"/>
        <end position="336"/>
    </location>
</feature>
<feature type="repeat" description="LRR 11; degenerate" evidence="6">
    <location>
        <begin position="337"/>
        <end position="357"/>
    </location>
</feature>
<feature type="repeat" description="LRR 12" evidence="3">
    <location>
        <begin position="358"/>
        <end position="382"/>
    </location>
</feature>
<feature type="repeat" description="LRR 13" evidence="3">
    <location>
        <begin position="383"/>
        <end position="406"/>
    </location>
</feature>
<feature type="repeat" description="LRR 14" evidence="3">
    <location>
        <begin position="408"/>
        <end position="428"/>
    </location>
</feature>
<feature type="repeat" description="LRR 15" evidence="3">
    <location>
        <begin position="429"/>
        <end position="452"/>
    </location>
</feature>
<feature type="repeat" description="LRR 16" evidence="3">
    <location>
        <begin position="454"/>
        <end position="476"/>
    </location>
</feature>
<feature type="repeat" description="LRR 17" evidence="3">
    <location>
        <begin position="477"/>
        <end position="500"/>
    </location>
</feature>
<feature type="repeat" description="LRR 18" evidence="3">
    <location>
        <begin position="502"/>
        <end position="524"/>
    </location>
</feature>
<feature type="repeat" description="LRR 19" evidence="3">
    <location>
        <begin position="525"/>
        <end position="549"/>
    </location>
</feature>
<feature type="repeat" description="LRR 20" evidence="3">
    <location>
        <begin position="551"/>
        <end position="572"/>
    </location>
</feature>
<feature type="repeat" description="LRR 21" evidence="3">
    <location>
        <begin position="573"/>
        <end position="597"/>
    </location>
</feature>
<feature type="repeat" description="LRR 22" evidence="3">
    <location>
        <begin position="599"/>
        <end position="623"/>
    </location>
</feature>
<feature type="repeat" description="LRR 23" evidence="3">
    <location>
        <begin position="667"/>
        <end position="690"/>
    </location>
</feature>
<feature type="repeat" description="LRR 24" evidence="3">
    <location>
        <begin position="691"/>
        <end position="714"/>
    </location>
</feature>
<feature type="repeat" description="LRR 25" evidence="3">
    <location>
        <begin position="715"/>
        <end position="739"/>
    </location>
</feature>
<feature type="repeat" description="LRR 26" evidence="3">
    <location>
        <begin position="741"/>
        <end position="759"/>
    </location>
</feature>
<feature type="region of interest" description="N-cap" evidence="2">
    <location>
        <begin position="24"/>
        <end position="90"/>
    </location>
</feature>
<feature type="region of interest" description="C-cap/acidic domain" evidence="2">
    <location>
        <begin position="760"/>
        <end position="812"/>
    </location>
</feature>
<feature type="glycosylation site" description="N-linked (GlcNAc...) asparagine" evidence="4">
    <location>
        <position position="71"/>
    </location>
</feature>
<feature type="glycosylation site" description="N-linked (GlcNAc...) asparagine" evidence="4">
    <location>
        <position position="108"/>
    </location>
</feature>
<feature type="glycosylation site" description="N-linked (GlcNAc...) asparagine" evidence="4">
    <location>
        <position position="190"/>
    </location>
</feature>
<feature type="glycosylation site" description="N-linked (GlcNAc...) asparagine" evidence="4">
    <location>
        <position position="203"/>
    </location>
</feature>
<feature type="glycosylation site" description="N-linked (GlcNAc...) asparagine" evidence="4">
    <location>
        <position position="211"/>
    </location>
</feature>
<feature type="glycosylation site" description="N-linked (GlcNAc...) asparagine" evidence="4">
    <location>
        <position position="261"/>
    </location>
</feature>
<feature type="glycosylation site" description="N-linked (GlcNAc...) asparagine" evidence="4">
    <location>
        <position position="299"/>
    </location>
</feature>
<feature type="glycosylation site" description="N-linked (GlcNAc...) asparagine" evidence="4">
    <location>
        <position position="310"/>
    </location>
</feature>
<feature type="glycosylation site" description="N-linked (GlcNAc...) asparagine" evidence="4">
    <location>
        <position position="378"/>
    </location>
</feature>
<feature type="glycosylation site" description="N-linked (GlcNAc...) asparagine" evidence="4">
    <location>
        <position position="396"/>
    </location>
</feature>
<feature type="glycosylation site" description="N-linked (GlcNAc...) asparagine" evidence="4">
    <location>
        <position position="416"/>
    </location>
</feature>
<feature type="glycosylation site" description="N-linked (GlcNAc...) asparagine" evidence="4">
    <location>
        <position position="464"/>
    </location>
</feature>
<feature type="glycosylation site" description="N-linked (GlcNAc...) asparagine" evidence="4">
    <location>
        <position position="519"/>
    </location>
</feature>
<feature type="glycosylation site" description="N-linked (GlcNAc...) asparagine" evidence="4">
    <location>
        <position position="563"/>
    </location>
</feature>
<feature type="glycosylation site" description="N-linked (GlcNAc...) asparagine" evidence="4">
    <location>
        <position position="674"/>
    </location>
</feature>
<feature type="glycosylation site" description="N-linked (GlcNAc...) asparagine" evidence="4">
    <location>
        <position position="698"/>
    </location>
</feature>
<feature type="glycosylation site" description="N-linked (GlcNAc...) asparagine" evidence="4">
    <location>
        <position position="714"/>
    </location>
</feature>
<feature type="glycosylation site" description="N-linked (GlcNAc...) asparagine" evidence="4">
    <location>
        <position position="746"/>
    </location>
</feature>
<feature type="glycosylation site" description="N-linked (GlcNAc...) asparagine" evidence="4">
    <location>
        <position position="767"/>
    </location>
</feature>
<protein>
    <recommendedName>
        <fullName evidence="8">Receptor-like protein 9DC2</fullName>
    </recommendedName>
</protein>
<proteinExistence type="inferred from homology"/>
<accession>P0DO06</accession>
<accession>Q946D6</accession>
<evidence type="ECO:0000250" key="1">
    <source>
        <dbReference type="UniProtKB" id="Q40235"/>
    </source>
</evidence>
<evidence type="ECO:0000250" key="2">
    <source>
        <dbReference type="UniProtKB" id="Q946D6"/>
    </source>
</evidence>
<evidence type="ECO:0000255" key="3"/>
<evidence type="ECO:0000255" key="4">
    <source>
        <dbReference type="PROSITE-ProRule" id="PRU00498"/>
    </source>
</evidence>
<evidence type="ECO:0000269" key="5">
    <source>
    </source>
</evidence>
<evidence type="ECO:0000305" key="6"/>
<evidence type="ECO:0000305" key="7">
    <source>
    </source>
</evidence>
<evidence type="ECO:0000312" key="8">
    <source>
        <dbReference type="EMBL" id="AAT77549.1"/>
    </source>
</evidence>